<reference key="1">
    <citation type="journal article" date="1992" name="Proc. Natl. Acad. Sci. U.S.A.">
        <title>The third gamma subunit of the gamma-aminobutyric acid type A receptor family.</title>
        <authorList>
            <person name="Herb A."/>
            <person name="Wisden W."/>
            <person name="Lueddens H."/>
            <person name="Puia G."/>
            <person name="Vicini S."/>
            <person name="Seeburg P.H."/>
        </authorList>
    </citation>
    <scope>NUCLEOTIDE SEQUENCE [MRNA]</scope>
    <scope>FUNCTION</scope>
    <scope>TRANSPORTER ACTIVITY</scope>
    <scope>TISSUE SPECIFICITY</scope>
    <source>
        <tissue>Brain</tissue>
    </source>
</reference>
<reference key="2">
    <citation type="journal article" date="1991" name="FEBS Lett.">
        <title>The gamma 3-subunit of the GABAA-receptor confers sensitivity to benzodiazepine receptor ligands.</title>
        <authorList>
            <person name="Knoflach F."/>
            <person name="Rhyner T."/>
            <person name="Villa M."/>
            <person name="Kellenberger S."/>
            <person name="Drescher U."/>
            <person name="Malherbe P."/>
            <person name="Sigel E."/>
            <person name="Moehler H."/>
        </authorList>
    </citation>
    <scope>NUCLEOTIDE SEQUENCE [MRNA]</scope>
    <scope>FUNCTION</scope>
    <scope>TRANSPORTER ACTIVITY</scope>
    <scope>INTERACTION WITH GABRA5 AND GABRB2</scope>
    <source>
        <strain>ZUR-SIV</strain>
        <tissue>Brain</tissue>
    </source>
</reference>
<reference key="3">
    <citation type="journal article" date="1999" name="Mol. Pharmacol.">
        <title>Incorporation of the pi subunit into functional gamma-aminobutyric Acid(A) receptors.</title>
        <authorList>
            <person name="Neelands T.R."/>
            <person name="Macdonald R.L."/>
        </authorList>
    </citation>
    <scope>FUNCTION</scope>
    <scope>TRANSPORTER ACTIVITY</scope>
    <scope>ACTIVITY REGULATION</scope>
    <scope>TISSUE SPECIFICITY</scope>
    <scope>INTERACTION WITH GABRA5; GABRB3 AND GABRP</scope>
</reference>
<comment type="function">
    <text evidence="2 6 7 8">Gamma subunit of the heteropentameric ligand-gated chloride channel gated by gamma-aminobutyric acid (GABA), a major inhibitory neurotransmitter in the brain (PubMed:10462548, PubMed:1311098, PubMed:1660002). GABA-gated chloride channels, also named GABA(A) receptors (GABAAR), consist of five subunits arranged around a central pore and contain GABA active binding site(s) located at the alpha and beta subunit interface(s) (By similarity). When activated by GABA, GABAARs selectively allow the flow of chloride across the cell membrane down their electrochemical gradient (PubMed:10462548, PubMed:1311098, PubMed:1660002).</text>
</comment>
<comment type="catalytic activity">
    <reaction evidence="6 7 8">
        <text>chloride(in) = chloride(out)</text>
        <dbReference type="Rhea" id="RHEA:29823"/>
        <dbReference type="ChEBI" id="CHEBI:17996"/>
    </reaction>
</comment>
<comment type="activity regulation">
    <text evidence="6">Allosterically potentiated by alphaxalone. Allosterically inhibited by pregnenolone sulfate. Inhibited by zinc and lanthanum.</text>
</comment>
<comment type="subunit">
    <text evidence="6 8">Heteropentamer, formed by a combination of alpha (GABRA1-6), beta (GABRB1-3), gamma (GABRG1-3), delta (GABRD), epsilon (GABRE), rho (GABRR1-3), pi (GABRP) and theta (GABRQ) chains, each subunit exhibiting distinct physiological and pharmacological properties.</text>
</comment>
<comment type="subcellular location">
    <subcellularLocation>
        <location>Postsynaptic cell membrane</location>
        <topology evidence="5">Multi-pass membrane protein</topology>
    </subcellularLocation>
    <subcellularLocation>
        <location>Cell membrane</location>
        <topology evidence="5">Multi-pass membrane protein</topology>
    </subcellularLocation>
</comment>
<comment type="tissue specificity">
    <text evidence="7">Expressed in brain.</text>
</comment>
<comment type="domain">
    <text evidence="2">GABAARs subunits share a common topological structure: a peptide sequence made up of a long extracellular N-terminal, four transmembrane domains, intracellular or cytoplasmic domain located between the third and the fourth transmembrane domains.</text>
</comment>
<comment type="PTM">
    <text evidence="3">May be palmitoylated.</text>
</comment>
<comment type="similarity">
    <text evidence="10">Belongs to the ligand-gated ion channel (TC 1.A.9) family. Gamma-aminobutyric acid receptor (TC 1.A.9.5) subfamily. GABRG3 sub-subfamily.</text>
</comment>
<feature type="signal peptide" evidence="5">
    <location>
        <begin position="1"/>
        <end position="17"/>
    </location>
</feature>
<feature type="chain" id="PRO_0000000483" description="Gamma-aminobutyric acid receptor subunit gamma-3">
    <location>
        <begin position="18"/>
        <end position="467"/>
    </location>
</feature>
<feature type="topological domain" description="Extracellular" evidence="10">
    <location>
        <begin position="18"/>
        <end position="256"/>
    </location>
</feature>
<feature type="transmembrane region" description="Helical" evidence="5">
    <location>
        <begin position="257"/>
        <end position="277"/>
    </location>
</feature>
<feature type="topological domain" description="Cytoplasmic" evidence="10">
    <location>
        <begin position="278"/>
        <end position="283"/>
    </location>
</feature>
<feature type="transmembrane region" description="Helical" evidence="5">
    <location>
        <begin position="284"/>
        <end position="303"/>
    </location>
</feature>
<feature type="topological domain" description="Extracellular" evidence="10">
    <location>
        <begin position="304"/>
        <end position="311"/>
    </location>
</feature>
<feature type="transmembrane region" description="Helical" evidence="5">
    <location>
        <begin position="312"/>
        <end position="332"/>
    </location>
</feature>
<feature type="topological domain" description="Cytoplasmic" evidence="10">
    <location>
        <begin position="333"/>
        <end position="446"/>
    </location>
</feature>
<feature type="transmembrane region" description="Helical" evidence="5">
    <location>
        <begin position="447"/>
        <end position="467"/>
    </location>
</feature>
<feature type="glycosylation site" description="N-linked (GlcNAc...) asparagine" evidence="5">
    <location>
        <position position="110"/>
    </location>
</feature>
<feature type="glycosylation site" description="N-linked (GlcNAc...) asparagine" evidence="5">
    <location>
        <position position="228"/>
    </location>
</feature>
<feature type="disulfide bond" evidence="4">
    <location>
        <begin position="171"/>
        <end position="185"/>
    </location>
</feature>
<feature type="sequence conflict" description="In Ref. 2; CAA44930." evidence="10" ref="2">
    <original>S</original>
    <variation>T</variation>
    <location>
        <position position="416"/>
    </location>
</feature>
<keyword id="KW-1003">Cell membrane</keyword>
<keyword id="KW-0868">Chloride</keyword>
<keyword id="KW-0869">Chloride channel</keyword>
<keyword id="KW-1015">Disulfide bond</keyword>
<keyword id="KW-0325">Glycoprotein</keyword>
<keyword id="KW-0407">Ion channel</keyword>
<keyword id="KW-0406">Ion transport</keyword>
<keyword id="KW-0449">Lipoprotein</keyword>
<keyword id="KW-0472">Membrane</keyword>
<keyword id="KW-0564">Palmitate</keyword>
<keyword id="KW-0628">Postsynaptic cell membrane</keyword>
<keyword id="KW-1185">Reference proteome</keyword>
<keyword id="KW-0732">Signal</keyword>
<keyword id="KW-0770">Synapse</keyword>
<keyword id="KW-0812">Transmembrane</keyword>
<keyword id="KW-1133">Transmembrane helix</keyword>
<keyword id="KW-0813">Transport</keyword>
<accession>P28473</accession>
<evidence type="ECO:0000250" key="1">
    <source>
        <dbReference type="UniProtKB" id="P14867"/>
    </source>
</evidence>
<evidence type="ECO:0000250" key="2">
    <source>
        <dbReference type="UniProtKB" id="P18507"/>
    </source>
</evidence>
<evidence type="ECO:0000250" key="3">
    <source>
        <dbReference type="UniProtKB" id="P22723"/>
    </source>
</evidence>
<evidence type="ECO:0000250" key="4">
    <source>
        <dbReference type="UniProtKB" id="P28472"/>
    </source>
</evidence>
<evidence type="ECO:0000255" key="5"/>
<evidence type="ECO:0000269" key="6">
    <source>
    </source>
</evidence>
<evidence type="ECO:0000269" key="7">
    <source>
    </source>
</evidence>
<evidence type="ECO:0000269" key="8">
    <source>
    </source>
</evidence>
<evidence type="ECO:0000303" key="9">
    <source>
    </source>
</evidence>
<evidence type="ECO:0000305" key="10"/>
<evidence type="ECO:0000312" key="11">
    <source>
        <dbReference type="RGD" id="621735"/>
    </source>
</evidence>
<name>GBRG3_RAT</name>
<protein>
    <recommendedName>
        <fullName evidence="9">Gamma-aminobutyric acid receptor subunit gamma-3</fullName>
    </recommendedName>
    <alternativeName>
        <fullName evidence="9">GABA(A) receptor subunit gamma-3</fullName>
        <shortName evidence="1">GABAAR subunit gamma-3</shortName>
    </alternativeName>
</protein>
<sequence>MAAKLLLLLCLFSGLHARSRRVEEDDSEDSPSNQKWVLAPKSQDTDVTLILNKLLREYDKKLRPDIGIKPTVIDVDIYVNSIGPVSSINMEYQIDIFFAQTWTDSRLRFNSTMKILTLNSNMVGLIWIPDTIFRNSKTAEAHWITTPNQLLRIWNDGKILYTLRLTINAECQLQLHNFPMDAHACPLTFSSYGYPKEEMIYRWRKNSVEAADQKSWRLYQFDFMGLRNTTEIVTTSAGDYVVMTIYFELSRRMGYFTIQTYIPCILTVVLSWVSFWIKKDATPARTTLGITTVLTMTTLSTIARKSLPRVSYVTAMDLFVTVCFLFVFAALMEYATLNYYSSCRKPTIRKKKTSLLHPDSTRWIPDRISLQAPSNYSLLDMRPPPPVMITLNNSMYWQEFEDTCVYECLDGKDCQSFFCCYEECKSGSWRRGRIHIDVSELDSYSRVFFPTSFLLFNLVYWVGYLYL</sequence>
<gene>
    <name evidence="11" type="primary">Gabrg3</name>
</gene>
<proteinExistence type="evidence at protein level"/>
<dbReference type="EMBL" id="M81142">
    <property type="protein sequence ID" value="AAA41181.1"/>
    <property type="molecule type" value="mRNA"/>
</dbReference>
<dbReference type="EMBL" id="X63324">
    <property type="protein sequence ID" value="CAA44930.1"/>
    <property type="molecule type" value="mRNA"/>
</dbReference>
<dbReference type="PIR" id="S19317">
    <property type="entry name" value="S19317"/>
</dbReference>
<dbReference type="RefSeq" id="NP_077346.3">
    <property type="nucleotide sequence ID" value="NM_024370.3"/>
</dbReference>
<dbReference type="SMR" id="P28473"/>
<dbReference type="CORUM" id="P28473"/>
<dbReference type="FunCoup" id="P28473">
    <property type="interactions" value="170"/>
</dbReference>
<dbReference type="STRING" id="10116.ENSRNOP00000076184"/>
<dbReference type="ChEMBL" id="CHEMBL1907607"/>
<dbReference type="DrugCentral" id="P28473"/>
<dbReference type="GlyCosmos" id="P28473">
    <property type="glycosylation" value="2 sites, No reported glycans"/>
</dbReference>
<dbReference type="GlyGen" id="P28473">
    <property type="glycosylation" value="2 sites"/>
</dbReference>
<dbReference type="PhosphoSitePlus" id="P28473"/>
<dbReference type="PaxDb" id="10116-ENSRNOP00000019971"/>
<dbReference type="Ensembl" id="ENSRNOT00000093339.2">
    <property type="protein sequence ID" value="ENSRNOP00000076184.1"/>
    <property type="gene ID" value="ENSRNOG00000014862.8"/>
</dbReference>
<dbReference type="GeneID" id="79211"/>
<dbReference type="KEGG" id="rno:79211"/>
<dbReference type="UCSC" id="RGD:621735">
    <property type="organism name" value="rat"/>
</dbReference>
<dbReference type="AGR" id="RGD:621735"/>
<dbReference type="CTD" id="2567"/>
<dbReference type="RGD" id="621735">
    <property type="gene designation" value="Gabrg3"/>
</dbReference>
<dbReference type="eggNOG" id="KOG3642">
    <property type="taxonomic scope" value="Eukaryota"/>
</dbReference>
<dbReference type="GeneTree" id="ENSGT00940000155607"/>
<dbReference type="InParanoid" id="P28473"/>
<dbReference type="OMA" id="PREEMVY"/>
<dbReference type="OrthoDB" id="15092at9989"/>
<dbReference type="PhylomeDB" id="P28473"/>
<dbReference type="TreeFam" id="TF315453"/>
<dbReference type="Reactome" id="R-RNO-977443">
    <property type="pathway name" value="GABA receptor activation"/>
</dbReference>
<dbReference type="PRO" id="PR:P28473"/>
<dbReference type="Proteomes" id="UP000002494">
    <property type="component" value="Chromosome 1"/>
</dbReference>
<dbReference type="Bgee" id="ENSRNOG00000014862">
    <property type="expression patterns" value="Expressed in frontal cortex and 2 other cell types or tissues"/>
</dbReference>
<dbReference type="ExpressionAtlas" id="P28473">
    <property type="expression patterns" value="baseline and differential"/>
</dbReference>
<dbReference type="GO" id="GO:0034707">
    <property type="term" value="C:chloride channel complex"/>
    <property type="evidence" value="ECO:0007669"/>
    <property type="project" value="UniProtKB-KW"/>
</dbReference>
<dbReference type="GO" id="GO:0032590">
    <property type="term" value="C:dendrite membrane"/>
    <property type="evidence" value="ECO:0000318"/>
    <property type="project" value="GO_Central"/>
</dbReference>
<dbReference type="GO" id="GO:1902711">
    <property type="term" value="C:GABA-A receptor complex"/>
    <property type="evidence" value="ECO:0000318"/>
    <property type="project" value="GO_Central"/>
</dbReference>
<dbReference type="GO" id="GO:0098982">
    <property type="term" value="C:GABA-ergic synapse"/>
    <property type="evidence" value="ECO:0000266"/>
    <property type="project" value="RGD"/>
</dbReference>
<dbReference type="GO" id="GO:0015630">
    <property type="term" value="C:microtubule cytoskeleton"/>
    <property type="evidence" value="ECO:0007669"/>
    <property type="project" value="Ensembl"/>
</dbReference>
<dbReference type="GO" id="GO:0005730">
    <property type="term" value="C:nucleolus"/>
    <property type="evidence" value="ECO:0007669"/>
    <property type="project" value="Ensembl"/>
</dbReference>
<dbReference type="GO" id="GO:0098794">
    <property type="term" value="C:postsynapse"/>
    <property type="evidence" value="ECO:0000318"/>
    <property type="project" value="GO_Central"/>
</dbReference>
<dbReference type="GO" id="GO:0045211">
    <property type="term" value="C:postsynaptic membrane"/>
    <property type="evidence" value="ECO:0007669"/>
    <property type="project" value="UniProtKB-SubCell"/>
</dbReference>
<dbReference type="GO" id="GO:0097060">
    <property type="term" value="C:synaptic membrane"/>
    <property type="evidence" value="ECO:0000266"/>
    <property type="project" value="RGD"/>
</dbReference>
<dbReference type="GO" id="GO:0005254">
    <property type="term" value="F:chloride channel activity"/>
    <property type="evidence" value="ECO:0000314"/>
    <property type="project" value="RGD"/>
</dbReference>
<dbReference type="GO" id="GO:0004890">
    <property type="term" value="F:GABA-A receptor activity"/>
    <property type="evidence" value="ECO:0000314"/>
    <property type="project" value="UniProtKB"/>
</dbReference>
<dbReference type="GO" id="GO:0022851">
    <property type="term" value="F:GABA-gated chloride ion channel activity"/>
    <property type="evidence" value="ECO:0000314"/>
    <property type="project" value="UniProtKB"/>
</dbReference>
<dbReference type="GO" id="GO:1904315">
    <property type="term" value="F:transmitter-gated monoatomic ion channel activity involved in regulation of postsynaptic membrane potential"/>
    <property type="evidence" value="ECO:0000266"/>
    <property type="project" value="RGD"/>
</dbReference>
<dbReference type="GO" id="GO:1902476">
    <property type="term" value="P:chloride transmembrane transport"/>
    <property type="evidence" value="ECO:0000318"/>
    <property type="project" value="GO_Central"/>
</dbReference>
<dbReference type="GO" id="GO:0007214">
    <property type="term" value="P:gamma-aminobutyric acid signaling pathway"/>
    <property type="evidence" value="ECO:0000318"/>
    <property type="project" value="GO_Central"/>
</dbReference>
<dbReference type="GO" id="GO:1904862">
    <property type="term" value="P:inhibitory synapse assembly"/>
    <property type="evidence" value="ECO:0000318"/>
    <property type="project" value="GO_Central"/>
</dbReference>
<dbReference type="GO" id="GO:0009410">
    <property type="term" value="P:response to xenobiotic stimulus"/>
    <property type="evidence" value="ECO:0000314"/>
    <property type="project" value="RGD"/>
</dbReference>
<dbReference type="GO" id="GO:0051932">
    <property type="term" value="P:synaptic transmission, GABAergic"/>
    <property type="evidence" value="ECO:0000318"/>
    <property type="project" value="GO_Central"/>
</dbReference>
<dbReference type="CDD" id="cd19000">
    <property type="entry name" value="LGIC_ECD_GABAAR_G"/>
    <property type="match status" value="1"/>
</dbReference>
<dbReference type="CDD" id="cd19054">
    <property type="entry name" value="LGIC_TM_GABAAR_gamma"/>
    <property type="match status" value="1"/>
</dbReference>
<dbReference type="FunFam" id="1.20.58.390:FF:000006">
    <property type="entry name" value="Putative gamma-aminobutyric acid receptor subunit gamma-2"/>
    <property type="match status" value="1"/>
</dbReference>
<dbReference type="FunFam" id="2.70.170.10:FF:000003">
    <property type="entry name" value="Putative gamma-aminobutyric acid receptor subunit gamma-2"/>
    <property type="match status" value="1"/>
</dbReference>
<dbReference type="Gene3D" id="2.70.170.10">
    <property type="entry name" value="Neurotransmitter-gated ion-channel ligand-binding domain"/>
    <property type="match status" value="1"/>
</dbReference>
<dbReference type="Gene3D" id="1.20.58.390">
    <property type="entry name" value="Neurotransmitter-gated ion-channel transmembrane domain"/>
    <property type="match status" value="1"/>
</dbReference>
<dbReference type="InterPro" id="IPR006028">
    <property type="entry name" value="GABAA/Glycine_rcpt"/>
</dbReference>
<dbReference type="InterPro" id="IPR005440">
    <property type="entry name" value="GABBAg3_rcpt"/>
</dbReference>
<dbReference type="InterPro" id="IPR005437">
    <property type="entry name" value="GABRG-1/4"/>
</dbReference>
<dbReference type="InterPro" id="IPR006202">
    <property type="entry name" value="Neur_chan_lig-bd"/>
</dbReference>
<dbReference type="InterPro" id="IPR036734">
    <property type="entry name" value="Neur_chan_lig-bd_sf"/>
</dbReference>
<dbReference type="InterPro" id="IPR006201">
    <property type="entry name" value="Neur_channel"/>
</dbReference>
<dbReference type="InterPro" id="IPR036719">
    <property type="entry name" value="Neuro-gated_channel_TM_sf"/>
</dbReference>
<dbReference type="InterPro" id="IPR038050">
    <property type="entry name" value="Neuro_actylchol_rec"/>
</dbReference>
<dbReference type="InterPro" id="IPR006029">
    <property type="entry name" value="Neurotrans-gated_channel_TM"/>
</dbReference>
<dbReference type="InterPro" id="IPR018000">
    <property type="entry name" value="Neurotransmitter_ion_chnl_CS"/>
</dbReference>
<dbReference type="NCBIfam" id="TIGR00860">
    <property type="entry name" value="LIC"/>
    <property type="match status" value="1"/>
</dbReference>
<dbReference type="PANTHER" id="PTHR18945">
    <property type="entry name" value="NEUROTRANSMITTER GATED ION CHANNEL"/>
    <property type="match status" value="1"/>
</dbReference>
<dbReference type="Pfam" id="PF02931">
    <property type="entry name" value="Neur_chan_LBD"/>
    <property type="match status" value="1"/>
</dbReference>
<dbReference type="Pfam" id="PF02932">
    <property type="entry name" value="Neur_chan_memb"/>
    <property type="match status" value="1"/>
</dbReference>
<dbReference type="PRINTS" id="PR00253">
    <property type="entry name" value="GABAARECEPTR"/>
</dbReference>
<dbReference type="PRINTS" id="PR01620">
    <property type="entry name" value="GABAARGAMMA"/>
</dbReference>
<dbReference type="PRINTS" id="PR01623">
    <property type="entry name" value="GABAARGAMMA3"/>
</dbReference>
<dbReference type="PRINTS" id="PR00252">
    <property type="entry name" value="NRIONCHANNEL"/>
</dbReference>
<dbReference type="SUPFAM" id="SSF90112">
    <property type="entry name" value="Neurotransmitter-gated ion-channel transmembrane pore"/>
    <property type="match status" value="1"/>
</dbReference>
<dbReference type="SUPFAM" id="SSF63712">
    <property type="entry name" value="Nicotinic receptor ligand binding domain-like"/>
    <property type="match status" value="1"/>
</dbReference>
<dbReference type="PROSITE" id="PS00236">
    <property type="entry name" value="NEUROTR_ION_CHANNEL"/>
    <property type="match status" value="1"/>
</dbReference>
<organism>
    <name type="scientific">Rattus norvegicus</name>
    <name type="common">Rat</name>
    <dbReference type="NCBI Taxonomy" id="10116"/>
    <lineage>
        <taxon>Eukaryota</taxon>
        <taxon>Metazoa</taxon>
        <taxon>Chordata</taxon>
        <taxon>Craniata</taxon>
        <taxon>Vertebrata</taxon>
        <taxon>Euteleostomi</taxon>
        <taxon>Mammalia</taxon>
        <taxon>Eutheria</taxon>
        <taxon>Euarchontoglires</taxon>
        <taxon>Glires</taxon>
        <taxon>Rodentia</taxon>
        <taxon>Myomorpha</taxon>
        <taxon>Muroidea</taxon>
        <taxon>Muridae</taxon>
        <taxon>Murinae</taxon>
        <taxon>Rattus</taxon>
    </lineage>
</organism>